<organism>
    <name type="scientific">Androctonus amoreuxi</name>
    <name type="common">African fattail scorpion</name>
    <name type="synonym">Scorpio amoreuxi</name>
    <dbReference type="NCBI Taxonomy" id="112024"/>
    <lineage>
        <taxon>Eukaryota</taxon>
        <taxon>Metazoa</taxon>
        <taxon>Ecdysozoa</taxon>
        <taxon>Arthropoda</taxon>
        <taxon>Chelicerata</taxon>
        <taxon>Arachnida</taxon>
        <taxon>Scorpiones</taxon>
        <taxon>Buthida</taxon>
        <taxon>Buthoidea</taxon>
        <taxon>Buthidae</taxon>
        <taxon>Androctonus</taxon>
    </lineage>
</organism>
<name>NDB4C_ANDAM</name>
<dbReference type="EMBL" id="FR821614">
    <property type="protein sequence ID" value="CBZ41127.1"/>
    <property type="molecule type" value="mRNA"/>
</dbReference>
<dbReference type="SMR" id="G8YYA6"/>
<dbReference type="GO" id="GO:0005576">
    <property type="term" value="C:extracellular region"/>
    <property type="evidence" value="ECO:0007669"/>
    <property type="project" value="UniProtKB-SubCell"/>
</dbReference>
<dbReference type="GO" id="GO:0016020">
    <property type="term" value="C:membrane"/>
    <property type="evidence" value="ECO:0007669"/>
    <property type="project" value="UniProtKB-KW"/>
</dbReference>
<dbReference type="GO" id="GO:0044218">
    <property type="term" value="C:other organism cell membrane"/>
    <property type="evidence" value="ECO:0007669"/>
    <property type="project" value="UniProtKB-KW"/>
</dbReference>
<dbReference type="GO" id="GO:0042742">
    <property type="term" value="P:defense response to bacterium"/>
    <property type="evidence" value="ECO:0007669"/>
    <property type="project" value="UniProtKB-KW"/>
</dbReference>
<dbReference type="GO" id="GO:0031640">
    <property type="term" value="P:killing of cells of another organism"/>
    <property type="evidence" value="ECO:0007669"/>
    <property type="project" value="UniProtKB-KW"/>
</dbReference>
<feature type="signal peptide" evidence="2">
    <location>
        <begin position="1"/>
        <end position="22"/>
    </location>
</feature>
<feature type="peptide" id="PRO_5000827074" description="Antimicrobial peptide 2">
    <location>
        <begin position="23"/>
        <end position="40"/>
    </location>
</feature>
<feature type="propeptide" id="PRO_5000827073" evidence="1">
    <location>
        <begin position="46"/>
        <end position="74"/>
    </location>
</feature>
<feature type="modified residue" description="Lysine amide" evidence="2">
    <location>
        <position position="40"/>
    </location>
</feature>
<evidence type="ECO:0000250" key="1"/>
<evidence type="ECO:0000269" key="2">
    <source>
    </source>
</evidence>
<evidence type="ECO:0000303" key="3">
    <source>
    </source>
</evidence>
<evidence type="ECO:0000303" key="4">
    <source>
    </source>
</evidence>
<evidence type="ECO:0000305" key="5"/>
<comment type="function">
    <text evidence="2">Has antibacterial activity against the Gram-positive bacteria S.aureus (MIC=48 uM), the Gram-negative bacteria E.coli (MIC=120 uM), and the yeast C.albicans (MIC=64 uM). Causes hemolysis on horse erythrocytes.</text>
</comment>
<comment type="subcellular location">
    <subcellularLocation>
        <location>Secreted</location>
    </subcellularLocation>
    <subcellularLocation>
        <location>Target cell membrane</location>
    </subcellularLocation>
    <text>Forms a helical membrane channel in the prey.</text>
</comment>
<comment type="tissue specificity">
    <text>Expressed by the venom gland.</text>
</comment>
<comment type="mass spectrometry"/>
<comment type="similarity">
    <text evidence="5">Belongs to the non-disulfide-bridged peptide (NDBP) superfamily. Short antimicrobial peptide (group 4) family.</text>
</comment>
<sequence>MEIKYLLTVFLVLLIVSDHCQAFPFSLIPHAIGGLISAIKGRRKRDLDGQIDRSRNFRKRDAELEELLSKLPIY</sequence>
<proteinExistence type="evidence at protein level"/>
<keyword id="KW-0027">Amidation</keyword>
<keyword id="KW-0044">Antibiotic</keyword>
<keyword id="KW-0929">Antimicrobial</keyword>
<keyword id="KW-0165">Cleavage on pair of basic residues</keyword>
<keyword id="KW-0204">Cytolysis</keyword>
<keyword id="KW-0903">Direct protein sequencing</keyword>
<keyword id="KW-0354">Hemolysis</keyword>
<keyword id="KW-0472">Membrane</keyword>
<keyword id="KW-0964">Secreted</keyword>
<keyword id="KW-0732">Signal</keyword>
<keyword id="KW-1052">Target cell membrane</keyword>
<keyword id="KW-1053">Target membrane</keyword>
<keyword id="KW-0812">Transmembrane</keyword>
<protein>
    <recommendedName>
        <fullName evidence="3">Antimicrobial peptide 2</fullName>
        <shortName evidence="3">AamAP2</shortName>
    </recommendedName>
    <alternativeName>
        <fullName evidence="4">Non-disulfide-bridged peptide 4.12</fullName>
        <shortName evidence="4">NDBP-4.12</shortName>
    </alternativeName>
</protein>
<reference key="1">
    <citation type="journal article" date="2012" name="Peptides">
        <title>Antimicrobial/cytolytic peptides from the venom of the North African scorpion, Androctonus amoreuxi: biochemical and functional characterization of natural peptides and a single site-substituted analog.</title>
        <authorList>
            <person name="Almaaytah A."/>
            <person name="Zhou M."/>
            <person name="Wang L."/>
            <person name="Chen T."/>
            <person name="Walker B."/>
            <person name="Shaw C."/>
        </authorList>
    </citation>
    <scope>NUCLEOTIDE SEQUENCE [MRNA]</scope>
    <scope>PROTEIN SEQUENCE OF 23-40</scope>
    <scope>FUNCTION</scope>
    <scope>AMIDATION AT LYS-40</scope>
    <scope>MASS SPECTROMETRY</scope>
    <source>
        <tissue>Venom</tissue>
        <tissue>Venom gland</tissue>
    </source>
</reference>
<reference key="2">
    <citation type="journal article" date="2014" name="Peptides">
        <title>Scorpion venom peptides with no disulfide bridges: a review.</title>
        <authorList>
            <person name="Almaaytah A."/>
            <person name="Albalas Q."/>
        </authorList>
    </citation>
    <scope>NOMENCLATURE</scope>
</reference>
<accession>G8YYA6</accession>